<gene>
    <name evidence="1" type="primary">ndhH</name>
</gene>
<reference key="1">
    <citation type="journal article" date="2004" name="Gene">
        <title>The complete nucleotide sequence of wild rice (Oryza nivara) chloroplast genome: first genome wide comparative sequence analysis of wild and cultivated rice.</title>
        <authorList>
            <person name="Masood M.S."/>
            <person name="Nishikawa T."/>
            <person name="Fukuoka S."/>
            <person name="Njenga P.K."/>
            <person name="Tsudzuki T."/>
            <person name="Kadowaki K."/>
        </authorList>
    </citation>
    <scope>NUCLEOTIDE SEQUENCE [LARGE SCALE GENOMIC DNA]</scope>
    <source>
        <strain evidence="2">cv. SL10</strain>
    </source>
</reference>
<feature type="chain" id="PRO_0000118607" description="NAD(P)H-quinone oxidoreductase subunit H, chloroplastic">
    <location>
        <begin position="1"/>
        <end position="393"/>
    </location>
</feature>
<dbReference type="EC" id="7.1.1.-" evidence="1"/>
<dbReference type="EMBL" id="AP006728">
    <property type="protein sequence ID" value="BAD26841.1"/>
    <property type="molecule type" value="Genomic_DNA"/>
</dbReference>
<dbReference type="EMBL" id="AP006728">
    <property type="protein sequence ID" value="BAD26851.1"/>
    <property type="molecule type" value="Genomic_DNA"/>
</dbReference>
<dbReference type="RefSeq" id="YP_052811.1">
    <property type="nucleotide sequence ID" value="NC_005973.1"/>
</dbReference>
<dbReference type="RefSeq" id="YP_052821.1">
    <property type="nucleotide sequence ID" value="NC_005973.1"/>
</dbReference>
<dbReference type="SMR" id="Q6ENA1"/>
<dbReference type="STRING" id="4536.Q6ENA1"/>
<dbReference type="GeneID" id="2885916"/>
<dbReference type="GeneID" id="2885920"/>
<dbReference type="eggNOG" id="KOG2870">
    <property type="taxonomic scope" value="Eukaryota"/>
</dbReference>
<dbReference type="eggNOG" id="KOG4770">
    <property type="taxonomic scope" value="Eukaryota"/>
</dbReference>
<dbReference type="Proteomes" id="UP000006591">
    <property type="component" value="Chloroplast"/>
</dbReference>
<dbReference type="GO" id="GO:0009535">
    <property type="term" value="C:chloroplast thylakoid membrane"/>
    <property type="evidence" value="ECO:0007669"/>
    <property type="project" value="UniProtKB-SubCell"/>
</dbReference>
<dbReference type="GO" id="GO:0009536">
    <property type="term" value="C:plastid"/>
    <property type="evidence" value="ECO:0000305"/>
    <property type="project" value="Gramene"/>
</dbReference>
<dbReference type="GO" id="GO:0051287">
    <property type="term" value="F:NAD binding"/>
    <property type="evidence" value="ECO:0007669"/>
    <property type="project" value="InterPro"/>
</dbReference>
<dbReference type="GO" id="GO:0016655">
    <property type="term" value="F:oxidoreductase activity, acting on NAD(P)H, quinone or similar compound as acceptor"/>
    <property type="evidence" value="ECO:0007669"/>
    <property type="project" value="UniProtKB-UniRule"/>
</dbReference>
<dbReference type="GO" id="GO:0048038">
    <property type="term" value="F:quinone binding"/>
    <property type="evidence" value="ECO:0007669"/>
    <property type="project" value="UniProtKB-KW"/>
</dbReference>
<dbReference type="GO" id="GO:0019684">
    <property type="term" value="P:photosynthesis, light reaction"/>
    <property type="evidence" value="ECO:0007669"/>
    <property type="project" value="UniProtKB-UniRule"/>
</dbReference>
<dbReference type="Gene3D" id="1.10.645.10">
    <property type="entry name" value="Cytochrome-c3 Hydrogenase, chain B"/>
    <property type="match status" value="1"/>
</dbReference>
<dbReference type="HAMAP" id="MF_01358">
    <property type="entry name" value="NDH1_NuoD"/>
    <property type="match status" value="1"/>
</dbReference>
<dbReference type="InterPro" id="IPR001135">
    <property type="entry name" value="NADH_Q_OxRdtase_suD"/>
</dbReference>
<dbReference type="InterPro" id="IPR014029">
    <property type="entry name" value="NADH_UbQ_OxRdtase_49kDa_CS"/>
</dbReference>
<dbReference type="InterPro" id="IPR022885">
    <property type="entry name" value="NDH1_su_D/H"/>
</dbReference>
<dbReference type="InterPro" id="IPR029014">
    <property type="entry name" value="NiFe-Hase_large"/>
</dbReference>
<dbReference type="NCBIfam" id="NF004739">
    <property type="entry name" value="PRK06075.1"/>
    <property type="match status" value="1"/>
</dbReference>
<dbReference type="NCBIfam" id="NF005649">
    <property type="entry name" value="PRK07415.1"/>
    <property type="match status" value="1"/>
</dbReference>
<dbReference type="PANTHER" id="PTHR11993:SF10">
    <property type="entry name" value="NADH DEHYDROGENASE [UBIQUINONE] IRON-SULFUR PROTEIN 2, MITOCHONDRIAL"/>
    <property type="match status" value="1"/>
</dbReference>
<dbReference type="PANTHER" id="PTHR11993">
    <property type="entry name" value="NADH-UBIQUINONE OXIDOREDUCTASE 49 KDA SUBUNIT"/>
    <property type="match status" value="1"/>
</dbReference>
<dbReference type="Pfam" id="PF00346">
    <property type="entry name" value="Complex1_49kDa"/>
    <property type="match status" value="1"/>
</dbReference>
<dbReference type="SUPFAM" id="SSF56762">
    <property type="entry name" value="HydB/Nqo4-like"/>
    <property type="match status" value="1"/>
</dbReference>
<dbReference type="PROSITE" id="PS00535">
    <property type="entry name" value="COMPLEX1_49K"/>
    <property type="match status" value="1"/>
</dbReference>
<geneLocation type="chloroplast"/>
<organism>
    <name type="scientific">Oryza nivara</name>
    <name type="common">Indian wild rice</name>
    <name type="synonym">Oryza sativa f. spontanea</name>
    <dbReference type="NCBI Taxonomy" id="4536"/>
    <lineage>
        <taxon>Eukaryota</taxon>
        <taxon>Viridiplantae</taxon>
        <taxon>Streptophyta</taxon>
        <taxon>Embryophyta</taxon>
        <taxon>Tracheophyta</taxon>
        <taxon>Spermatophyta</taxon>
        <taxon>Magnoliopsida</taxon>
        <taxon>Liliopsida</taxon>
        <taxon>Poales</taxon>
        <taxon>Poaceae</taxon>
        <taxon>BOP clade</taxon>
        <taxon>Oryzoideae</taxon>
        <taxon>Oryzeae</taxon>
        <taxon>Oryzinae</taxon>
        <taxon>Oryza</taxon>
    </lineage>
</organism>
<evidence type="ECO:0000255" key="1">
    <source>
        <dbReference type="HAMAP-Rule" id="MF_01358"/>
    </source>
</evidence>
<evidence type="ECO:0000312" key="2">
    <source>
        <dbReference type="Proteomes" id="UP000006591"/>
    </source>
</evidence>
<name>NDHH_ORYNI</name>
<accession>Q6ENA1</accession>
<accession>Q6ENB1</accession>
<keyword id="KW-0150">Chloroplast</keyword>
<keyword id="KW-0472">Membrane</keyword>
<keyword id="KW-0520">NAD</keyword>
<keyword id="KW-0521">NADP</keyword>
<keyword id="KW-0934">Plastid</keyword>
<keyword id="KW-0618">Plastoquinone</keyword>
<keyword id="KW-0874">Quinone</keyword>
<keyword id="KW-1185">Reference proteome</keyword>
<keyword id="KW-0793">Thylakoid</keyword>
<keyword id="KW-1278">Translocase</keyword>
<keyword id="KW-0813">Transport</keyword>
<comment type="function">
    <text evidence="1">NDH shuttles electrons from NAD(P)H:plastoquinone, via FMN and iron-sulfur (Fe-S) centers, to quinones in the photosynthetic chain and possibly in a chloroplast respiratory chain. The immediate electron acceptor for the enzyme in this species is believed to be plastoquinone. Couples the redox reaction to proton translocation, and thus conserves the redox energy in a proton gradient.</text>
</comment>
<comment type="catalytic activity">
    <reaction evidence="1">
        <text>a plastoquinone + NADH + (n+1) H(+)(in) = a plastoquinol + NAD(+) + n H(+)(out)</text>
        <dbReference type="Rhea" id="RHEA:42608"/>
        <dbReference type="Rhea" id="RHEA-COMP:9561"/>
        <dbReference type="Rhea" id="RHEA-COMP:9562"/>
        <dbReference type="ChEBI" id="CHEBI:15378"/>
        <dbReference type="ChEBI" id="CHEBI:17757"/>
        <dbReference type="ChEBI" id="CHEBI:57540"/>
        <dbReference type="ChEBI" id="CHEBI:57945"/>
        <dbReference type="ChEBI" id="CHEBI:62192"/>
    </reaction>
</comment>
<comment type="catalytic activity">
    <reaction evidence="1">
        <text>a plastoquinone + NADPH + (n+1) H(+)(in) = a plastoquinol + NADP(+) + n H(+)(out)</text>
        <dbReference type="Rhea" id="RHEA:42612"/>
        <dbReference type="Rhea" id="RHEA-COMP:9561"/>
        <dbReference type="Rhea" id="RHEA-COMP:9562"/>
        <dbReference type="ChEBI" id="CHEBI:15378"/>
        <dbReference type="ChEBI" id="CHEBI:17757"/>
        <dbReference type="ChEBI" id="CHEBI:57783"/>
        <dbReference type="ChEBI" id="CHEBI:58349"/>
        <dbReference type="ChEBI" id="CHEBI:62192"/>
    </reaction>
</comment>
<comment type="subunit">
    <text evidence="1">NDH is composed of at least 16 different subunits, 5 of which are encoded in the nucleus.</text>
</comment>
<comment type="subcellular location">
    <subcellularLocation>
        <location evidence="1">Plastid</location>
        <location evidence="1">Chloroplast thylakoid membrane</location>
        <topology evidence="1">Peripheral membrane protein</topology>
        <orientation evidence="1">Stromal side</orientation>
    </subcellularLocation>
</comment>
<comment type="miscellaneous">
    <text>There is a 56 residue fragment from the N-terminus in a second position on the plastid genome; it is not clear if this is transcribed.</text>
</comment>
<comment type="similarity">
    <text evidence="1">Belongs to the complex I 49 kDa subunit family.</text>
</comment>
<sequence length="393" mass="45685">MSLPLTRKDLMIVNMGPQHPSMHGVLRLIVTLDGEDVIDCEPILGYLHRGMEKIAENRTIIQYLPYVTRWDYLATMFTEAITVNAPEFLENIQIPQRASYIRVIMLELSRIASHLLWLGPFMADLGAQTPFFYIFRERELIYDLFEAATGMRMMHNYFRIGGVAADLPYGWIDKCLDFCDYFLRGVIEYQQLITQNPIFLERVEGVGFISGEEAVNWGLSGPMLRASGIQWDLRKVDLYESYNQFDWKVQWQKEGDSLARYLVRIGEMRESIKIIQQAVEKIPGGPYENLEVRRFKKAKNSEWNDFEYRFLGKKPSPNFELSKQELYARVEAPKGELGIYLVGDDSLFPWRWKIRPPGFINLQILPQLVKKMKLADIMTILGSIDIIMGEVDR</sequence>
<proteinExistence type="inferred from homology"/>
<protein>
    <recommendedName>
        <fullName evidence="1">NAD(P)H-quinone oxidoreductase subunit H, chloroplastic</fullName>
        <ecNumber evidence="1">7.1.1.-</ecNumber>
    </recommendedName>
    <alternativeName>
        <fullName>NAD(P)H dehydrogenase subunit H</fullName>
    </alternativeName>
    <alternativeName>
        <fullName evidence="1">NADH-plastoquinone oxidoreductase 49 kDa subunit</fullName>
    </alternativeName>
    <alternativeName>
        <fullName evidence="1">NADH-plastoquinone oxidoreductase subunit H</fullName>
    </alternativeName>
</protein>